<sequence>MAKRKVIKKKIVRKNIAKGIVYISATFNNTMVTVTDEMGNAIAWSSAGGLGFKGSKKSTPYAAQQAVEDAMNKAKEHGIKEVGIKVQGPGSGRETAVKSIGGVEGIKVLYLKDITPLAHNGCRPPKRRRV</sequence>
<organism>
    <name type="scientific">Campylobacter fetus subsp. fetus (strain 82-40)</name>
    <dbReference type="NCBI Taxonomy" id="360106"/>
    <lineage>
        <taxon>Bacteria</taxon>
        <taxon>Pseudomonadati</taxon>
        <taxon>Campylobacterota</taxon>
        <taxon>Epsilonproteobacteria</taxon>
        <taxon>Campylobacterales</taxon>
        <taxon>Campylobacteraceae</taxon>
        <taxon>Campylobacter</taxon>
    </lineage>
</organism>
<evidence type="ECO:0000255" key="1">
    <source>
        <dbReference type="HAMAP-Rule" id="MF_01310"/>
    </source>
</evidence>
<evidence type="ECO:0000305" key="2"/>
<dbReference type="EMBL" id="CP000487">
    <property type="protein sequence ID" value="ABK81763.1"/>
    <property type="molecule type" value="Genomic_DNA"/>
</dbReference>
<dbReference type="RefSeq" id="WP_002848034.1">
    <property type="nucleotide sequence ID" value="NC_008599.1"/>
</dbReference>
<dbReference type="SMR" id="A0RM34"/>
<dbReference type="GeneID" id="61063901"/>
<dbReference type="KEGG" id="cff:CFF8240_0057"/>
<dbReference type="eggNOG" id="COG0100">
    <property type="taxonomic scope" value="Bacteria"/>
</dbReference>
<dbReference type="HOGENOM" id="CLU_072439_5_0_7"/>
<dbReference type="Proteomes" id="UP000000760">
    <property type="component" value="Chromosome"/>
</dbReference>
<dbReference type="GO" id="GO:1990904">
    <property type="term" value="C:ribonucleoprotein complex"/>
    <property type="evidence" value="ECO:0007669"/>
    <property type="project" value="UniProtKB-KW"/>
</dbReference>
<dbReference type="GO" id="GO:0005840">
    <property type="term" value="C:ribosome"/>
    <property type="evidence" value="ECO:0007669"/>
    <property type="project" value="UniProtKB-KW"/>
</dbReference>
<dbReference type="GO" id="GO:0019843">
    <property type="term" value="F:rRNA binding"/>
    <property type="evidence" value="ECO:0007669"/>
    <property type="project" value="UniProtKB-UniRule"/>
</dbReference>
<dbReference type="GO" id="GO:0003735">
    <property type="term" value="F:structural constituent of ribosome"/>
    <property type="evidence" value="ECO:0007669"/>
    <property type="project" value="InterPro"/>
</dbReference>
<dbReference type="GO" id="GO:0006412">
    <property type="term" value="P:translation"/>
    <property type="evidence" value="ECO:0007669"/>
    <property type="project" value="UniProtKB-UniRule"/>
</dbReference>
<dbReference type="FunFam" id="3.30.420.80:FF:000001">
    <property type="entry name" value="30S ribosomal protein S11"/>
    <property type="match status" value="1"/>
</dbReference>
<dbReference type="Gene3D" id="3.30.420.80">
    <property type="entry name" value="Ribosomal protein S11"/>
    <property type="match status" value="1"/>
</dbReference>
<dbReference type="HAMAP" id="MF_01310">
    <property type="entry name" value="Ribosomal_uS11"/>
    <property type="match status" value="1"/>
</dbReference>
<dbReference type="InterPro" id="IPR001971">
    <property type="entry name" value="Ribosomal_uS11"/>
</dbReference>
<dbReference type="InterPro" id="IPR019981">
    <property type="entry name" value="Ribosomal_uS11_bac-type"/>
</dbReference>
<dbReference type="InterPro" id="IPR018102">
    <property type="entry name" value="Ribosomal_uS11_CS"/>
</dbReference>
<dbReference type="InterPro" id="IPR036967">
    <property type="entry name" value="Ribosomal_uS11_sf"/>
</dbReference>
<dbReference type="NCBIfam" id="NF003698">
    <property type="entry name" value="PRK05309.1"/>
    <property type="match status" value="1"/>
</dbReference>
<dbReference type="NCBIfam" id="TIGR03632">
    <property type="entry name" value="uS11_bact"/>
    <property type="match status" value="1"/>
</dbReference>
<dbReference type="PANTHER" id="PTHR11759">
    <property type="entry name" value="40S RIBOSOMAL PROTEIN S14/30S RIBOSOMAL PROTEIN S11"/>
    <property type="match status" value="1"/>
</dbReference>
<dbReference type="Pfam" id="PF00411">
    <property type="entry name" value="Ribosomal_S11"/>
    <property type="match status" value="1"/>
</dbReference>
<dbReference type="PIRSF" id="PIRSF002131">
    <property type="entry name" value="Ribosomal_S11"/>
    <property type="match status" value="1"/>
</dbReference>
<dbReference type="SUPFAM" id="SSF53137">
    <property type="entry name" value="Translational machinery components"/>
    <property type="match status" value="1"/>
</dbReference>
<dbReference type="PROSITE" id="PS00054">
    <property type="entry name" value="RIBOSOMAL_S11"/>
    <property type="match status" value="1"/>
</dbReference>
<feature type="chain" id="PRO_0000294732" description="Small ribosomal subunit protein uS11">
    <location>
        <begin position="1"/>
        <end position="130"/>
    </location>
</feature>
<protein>
    <recommendedName>
        <fullName evidence="1">Small ribosomal subunit protein uS11</fullName>
    </recommendedName>
    <alternativeName>
        <fullName evidence="2">30S ribosomal protein S11</fullName>
    </alternativeName>
</protein>
<comment type="function">
    <text evidence="1">Located on the platform of the 30S subunit, it bridges several disparate RNA helices of the 16S rRNA. Forms part of the Shine-Dalgarno cleft in the 70S ribosome.</text>
</comment>
<comment type="subunit">
    <text evidence="1">Part of the 30S ribosomal subunit. Interacts with proteins S7 and S18. Binds to IF-3.</text>
</comment>
<comment type="similarity">
    <text evidence="1">Belongs to the universal ribosomal protein uS11 family.</text>
</comment>
<proteinExistence type="inferred from homology"/>
<gene>
    <name evidence="1" type="primary">rpsK</name>
    <name type="ordered locus">CFF8240_0057</name>
</gene>
<accession>A0RM34</accession>
<name>RS11_CAMFF</name>
<reference key="1">
    <citation type="submission" date="2006-11" db="EMBL/GenBank/DDBJ databases">
        <title>Sequence of Campylobacter fetus subsp. fetus 82-40.</title>
        <authorList>
            <person name="Fouts D.E."/>
            <person name="Nelson K.E."/>
        </authorList>
    </citation>
    <scope>NUCLEOTIDE SEQUENCE [LARGE SCALE GENOMIC DNA]</scope>
    <source>
        <strain>82-40</strain>
    </source>
</reference>
<keyword id="KW-0687">Ribonucleoprotein</keyword>
<keyword id="KW-0689">Ribosomal protein</keyword>
<keyword id="KW-0694">RNA-binding</keyword>
<keyword id="KW-0699">rRNA-binding</keyword>